<proteinExistence type="predicted"/>
<evidence type="ECO:0000255" key="1"/>
<name>YRKC_BACSU</name>
<keyword id="KW-0067">ATP-binding</keyword>
<keyword id="KW-0547">Nucleotide-binding</keyword>
<keyword id="KW-1185">Reference proteome</keyword>
<protein>
    <recommendedName>
        <fullName>Uncharacterized protein YrkC</fullName>
    </recommendedName>
</protein>
<reference key="1">
    <citation type="journal article" date="1996" name="Microbiology">
        <title>Systematic sequencing of the 283 kb 210 degrees-232 degrees region of the Bacillus subtilis genome containing the skin element and many sporulation genes.</title>
        <authorList>
            <person name="Mizuno M."/>
            <person name="Masuda S."/>
            <person name="Takemaru K."/>
            <person name="Hosono S."/>
            <person name="Sato T."/>
            <person name="Takeuchi M."/>
            <person name="Kobayashi Y."/>
        </authorList>
    </citation>
    <scope>NUCLEOTIDE SEQUENCE [GENOMIC DNA]</scope>
    <source>
        <strain>168 / JH642</strain>
    </source>
</reference>
<reference key="2">
    <citation type="journal article" date="1997" name="Nature">
        <title>The complete genome sequence of the Gram-positive bacterium Bacillus subtilis.</title>
        <authorList>
            <person name="Kunst F."/>
            <person name="Ogasawara N."/>
            <person name="Moszer I."/>
            <person name="Albertini A.M."/>
            <person name="Alloni G."/>
            <person name="Azevedo V."/>
            <person name="Bertero M.G."/>
            <person name="Bessieres P."/>
            <person name="Bolotin A."/>
            <person name="Borchert S."/>
            <person name="Borriss R."/>
            <person name="Boursier L."/>
            <person name="Brans A."/>
            <person name="Braun M."/>
            <person name="Brignell S.C."/>
            <person name="Bron S."/>
            <person name="Brouillet S."/>
            <person name="Bruschi C.V."/>
            <person name="Caldwell B."/>
            <person name="Capuano V."/>
            <person name="Carter N.M."/>
            <person name="Choi S.-K."/>
            <person name="Codani J.-J."/>
            <person name="Connerton I.F."/>
            <person name="Cummings N.J."/>
            <person name="Daniel R.A."/>
            <person name="Denizot F."/>
            <person name="Devine K.M."/>
            <person name="Duesterhoeft A."/>
            <person name="Ehrlich S.D."/>
            <person name="Emmerson P.T."/>
            <person name="Entian K.-D."/>
            <person name="Errington J."/>
            <person name="Fabret C."/>
            <person name="Ferrari E."/>
            <person name="Foulger D."/>
            <person name="Fritz C."/>
            <person name="Fujita M."/>
            <person name="Fujita Y."/>
            <person name="Fuma S."/>
            <person name="Galizzi A."/>
            <person name="Galleron N."/>
            <person name="Ghim S.-Y."/>
            <person name="Glaser P."/>
            <person name="Goffeau A."/>
            <person name="Golightly E.J."/>
            <person name="Grandi G."/>
            <person name="Guiseppi G."/>
            <person name="Guy B.J."/>
            <person name="Haga K."/>
            <person name="Haiech J."/>
            <person name="Harwood C.R."/>
            <person name="Henaut A."/>
            <person name="Hilbert H."/>
            <person name="Holsappel S."/>
            <person name="Hosono S."/>
            <person name="Hullo M.-F."/>
            <person name="Itaya M."/>
            <person name="Jones L.-M."/>
            <person name="Joris B."/>
            <person name="Karamata D."/>
            <person name="Kasahara Y."/>
            <person name="Klaerr-Blanchard M."/>
            <person name="Klein C."/>
            <person name="Kobayashi Y."/>
            <person name="Koetter P."/>
            <person name="Koningstein G."/>
            <person name="Krogh S."/>
            <person name="Kumano M."/>
            <person name="Kurita K."/>
            <person name="Lapidus A."/>
            <person name="Lardinois S."/>
            <person name="Lauber J."/>
            <person name="Lazarevic V."/>
            <person name="Lee S.-M."/>
            <person name="Levine A."/>
            <person name="Liu H."/>
            <person name="Masuda S."/>
            <person name="Mauel C."/>
            <person name="Medigue C."/>
            <person name="Medina N."/>
            <person name="Mellado R.P."/>
            <person name="Mizuno M."/>
            <person name="Moestl D."/>
            <person name="Nakai S."/>
            <person name="Noback M."/>
            <person name="Noone D."/>
            <person name="O'Reilly M."/>
            <person name="Ogawa K."/>
            <person name="Ogiwara A."/>
            <person name="Oudega B."/>
            <person name="Park S.-H."/>
            <person name="Parro V."/>
            <person name="Pohl T.M."/>
            <person name="Portetelle D."/>
            <person name="Porwollik S."/>
            <person name="Prescott A.M."/>
            <person name="Presecan E."/>
            <person name="Pujic P."/>
            <person name="Purnelle B."/>
            <person name="Rapoport G."/>
            <person name="Rey M."/>
            <person name="Reynolds S."/>
            <person name="Rieger M."/>
            <person name="Rivolta C."/>
            <person name="Rocha E."/>
            <person name="Roche B."/>
            <person name="Rose M."/>
            <person name="Sadaie Y."/>
            <person name="Sato T."/>
            <person name="Scanlan E."/>
            <person name="Schleich S."/>
            <person name="Schroeter R."/>
            <person name="Scoffone F."/>
            <person name="Sekiguchi J."/>
            <person name="Sekowska A."/>
            <person name="Seror S.J."/>
            <person name="Serror P."/>
            <person name="Shin B.-S."/>
            <person name="Soldo B."/>
            <person name="Sorokin A."/>
            <person name="Tacconi E."/>
            <person name="Takagi T."/>
            <person name="Takahashi H."/>
            <person name="Takemaru K."/>
            <person name="Takeuchi M."/>
            <person name="Tamakoshi A."/>
            <person name="Tanaka T."/>
            <person name="Terpstra P."/>
            <person name="Tognoni A."/>
            <person name="Tosato V."/>
            <person name="Uchiyama S."/>
            <person name="Vandenbol M."/>
            <person name="Vannier F."/>
            <person name="Vassarotti A."/>
            <person name="Viari A."/>
            <person name="Wambutt R."/>
            <person name="Wedler E."/>
            <person name="Wedler H."/>
            <person name="Weitzenegger T."/>
            <person name="Winters P."/>
            <person name="Wipat A."/>
            <person name="Yamamoto H."/>
            <person name="Yamane K."/>
            <person name="Yasumoto K."/>
            <person name="Yata K."/>
            <person name="Yoshida K."/>
            <person name="Yoshikawa H.-F."/>
            <person name="Zumstein E."/>
            <person name="Yoshikawa H."/>
            <person name="Danchin A."/>
        </authorList>
    </citation>
    <scope>NUCLEOTIDE SEQUENCE [LARGE SCALE GENOMIC DNA]</scope>
    <source>
        <strain>168</strain>
    </source>
</reference>
<sequence length="186" mass="21255">MYYNPFSPQCYYYVTVPMYNDGRSVYWTIPNEMEKVHRGADLRSSYEDRNLLLKDYGPKPFVVNINRATKQNNTFRTALWTGKHFQVTLMSLGIGEDIGLEIHPNVDQFLRIEQGRGIVKMGKSKDHLNFQRNVYDDSAIVVPAGTWHNVINTGNTPLKLYSIYAPPNHPFGTVHETKADAVAAED</sequence>
<organism>
    <name type="scientific">Bacillus subtilis (strain 168)</name>
    <dbReference type="NCBI Taxonomy" id="224308"/>
    <lineage>
        <taxon>Bacteria</taxon>
        <taxon>Bacillati</taxon>
        <taxon>Bacillota</taxon>
        <taxon>Bacilli</taxon>
        <taxon>Bacillales</taxon>
        <taxon>Bacillaceae</taxon>
        <taxon>Bacillus</taxon>
    </lineage>
</organism>
<accession>P54430</accession>
<gene>
    <name type="primary">yrkC</name>
    <name type="ordered locus">BSU26560</name>
</gene>
<dbReference type="EMBL" id="D84432">
    <property type="protein sequence ID" value="BAA12358.1"/>
    <property type="molecule type" value="Genomic_DNA"/>
</dbReference>
<dbReference type="EMBL" id="AL009126">
    <property type="protein sequence ID" value="CAB14597.1"/>
    <property type="molecule type" value="Genomic_DNA"/>
</dbReference>
<dbReference type="PIR" id="A69976">
    <property type="entry name" value="A69976"/>
</dbReference>
<dbReference type="RefSeq" id="NP_390533.1">
    <property type="nucleotide sequence ID" value="NC_000964.3"/>
</dbReference>
<dbReference type="RefSeq" id="WP_004398494.1">
    <property type="nucleotide sequence ID" value="NZ_OZ025638.1"/>
</dbReference>
<dbReference type="SMR" id="P54430"/>
<dbReference type="FunCoup" id="P54430">
    <property type="interactions" value="3"/>
</dbReference>
<dbReference type="IntAct" id="P54430">
    <property type="interactions" value="1"/>
</dbReference>
<dbReference type="STRING" id="224308.BSU26560"/>
<dbReference type="PaxDb" id="224308-BSU26560"/>
<dbReference type="EnsemblBacteria" id="CAB14597">
    <property type="protein sequence ID" value="CAB14597"/>
    <property type="gene ID" value="BSU_26560"/>
</dbReference>
<dbReference type="GeneID" id="937645"/>
<dbReference type="KEGG" id="bsu:BSU26560"/>
<dbReference type="PATRIC" id="fig|224308.179.peg.2885"/>
<dbReference type="eggNOG" id="COG0662">
    <property type="taxonomic scope" value="Bacteria"/>
</dbReference>
<dbReference type="InParanoid" id="P54430"/>
<dbReference type="OrthoDB" id="3231985at2"/>
<dbReference type="BioCyc" id="BSUB:BSU26560-MONOMER"/>
<dbReference type="Proteomes" id="UP000001570">
    <property type="component" value="Chromosome"/>
</dbReference>
<dbReference type="GO" id="GO:0005524">
    <property type="term" value="F:ATP binding"/>
    <property type="evidence" value="ECO:0007669"/>
    <property type="project" value="UniProtKB-KW"/>
</dbReference>
<dbReference type="CDD" id="cd02223">
    <property type="entry name" value="cupin_Bh2720-like"/>
    <property type="match status" value="1"/>
</dbReference>
<dbReference type="Gene3D" id="2.60.120.10">
    <property type="entry name" value="Jelly Rolls"/>
    <property type="match status" value="1"/>
</dbReference>
<dbReference type="InterPro" id="IPR013096">
    <property type="entry name" value="Cupin_2"/>
</dbReference>
<dbReference type="InterPro" id="IPR052538">
    <property type="entry name" value="Flavonoid_dioxygenase-like"/>
</dbReference>
<dbReference type="InterPro" id="IPR014710">
    <property type="entry name" value="RmlC-like_jellyroll"/>
</dbReference>
<dbReference type="InterPro" id="IPR011051">
    <property type="entry name" value="RmlC_Cupin_sf"/>
</dbReference>
<dbReference type="PANTHER" id="PTHR43346">
    <property type="entry name" value="LIGAND BINDING DOMAIN PROTEIN, PUTATIVE (AFU_ORTHOLOGUE AFUA_6G14370)-RELATED"/>
    <property type="match status" value="1"/>
</dbReference>
<dbReference type="PANTHER" id="PTHR43346:SF1">
    <property type="entry name" value="QUERCETIN 2,3-DIOXYGENASE-RELATED"/>
    <property type="match status" value="1"/>
</dbReference>
<dbReference type="Pfam" id="PF07883">
    <property type="entry name" value="Cupin_2"/>
    <property type="match status" value="1"/>
</dbReference>
<dbReference type="SUPFAM" id="SSF51182">
    <property type="entry name" value="RmlC-like cupins"/>
    <property type="match status" value="1"/>
</dbReference>
<feature type="chain" id="PRO_0000049869" description="Uncharacterized protein YrkC">
    <location>
        <begin position="1"/>
        <end position="186"/>
    </location>
</feature>
<feature type="domain" description="Cupin type-2" evidence="1">
    <location>
        <begin position="89"/>
        <end position="164"/>
    </location>
</feature>
<feature type="binding site" evidence="1">
    <location>
        <begin position="117"/>
        <end position="124"/>
    </location>
    <ligand>
        <name>ATP</name>
        <dbReference type="ChEBI" id="CHEBI:30616"/>
    </ligand>
</feature>